<proteinExistence type="inferred from homology"/>
<organism>
    <name type="scientific">Buchnera aphidicola subsp. Cinara cedri (strain Cc)</name>
    <dbReference type="NCBI Taxonomy" id="372461"/>
    <lineage>
        <taxon>Bacteria</taxon>
        <taxon>Pseudomonadati</taxon>
        <taxon>Pseudomonadota</taxon>
        <taxon>Gammaproteobacteria</taxon>
        <taxon>Enterobacterales</taxon>
        <taxon>Erwiniaceae</taxon>
        <taxon>Buchnera</taxon>
    </lineage>
</organism>
<gene>
    <name evidence="1" type="primary">cyoE</name>
    <name type="ordered locus">BCc_287</name>
</gene>
<evidence type="ECO:0000255" key="1">
    <source>
        <dbReference type="HAMAP-Rule" id="MF_00154"/>
    </source>
</evidence>
<evidence type="ECO:0000305" key="2"/>
<reference key="1">
    <citation type="journal article" date="2006" name="Science">
        <title>A small microbial genome: the end of a long symbiotic relationship?</title>
        <authorList>
            <person name="Perez-Brocal V."/>
            <person name="Gil R."/>
            <person name="Ramos S."/>
            <person name="Lamelas A."/>
            <person name="Postigo M."/>
            <person name="Michelena J.M."/>
            <person name="Silva F.J."/>
            <person name="Moya A."/>
            <person name="Latorre A."/>
        </authorList>
    </citation>
    <scope>NUCLEOTIDE SEQUENCE [LARGE SCALE GENOMIC DNA]</scope>
    <source>
        <strain>Cc</strain>
    </source>
</reference>
<feature type="chain" id="PRO_0000345990" description="Protoheme IX farnesyltransferase">
    <location>
        <begin position="1"/>
        <end position="279"/>
    </location>
</feature>
<feature type="transmembrane region" description="Helical" evidence="1">
    <location>
        <begin position="1"/>
        <end position="21"/>
    </location>
</feature>
<feature type="transmembrane region" description="Helical" evidence="1">
    <location>
        <begin position="29"/>
        <end position="49"/>
    </location>
</feature>
<feature type="transmembrane region" description="Helical" evidence="1">
    <location>
        <begin position="79"/>
        <end position="99"/>
    </location>
</feature>
<feature type="transmembrane region" description="Helical" evidence="1">
    <location>
        <begin position="101"/>
        <end position="121"/>
    </location>
</feature>
<feature type="transmembrane region" description="Helical" evidence="1">
    <location>
        <begin position="128"/>
        <end position="148"/>
    </location>
</feature>
<feature type="transmembrane region" description="Helical" evidence="1">
    <location>
        <begin position="156"/>
        <end position="176"/>
    </location>
</feature>
<feature type="transmembrane region" description="Helical" evidence="1">
    <location>
        <begin position="200"/>
        <end position="220"/>
    </location>
</feature>
<feature type="transmembrane region" description="Helical" evidence="1">
    <location>
        <begin position="225"/>
        <end position="245"/>
    </location>
</feature>
<feature type="transmembrane region" description="Helical" evidence="1">
    <location>
        <begin position="254"/>
        <end position="274"/>
    </location>
</feature>
<protein>
    <recommendedName>
        <fullName evidence="1">Protoheme IX farnesyltransferase</fullName>
        <ecNumber evidence="1">2.5.1.141</ecNumber>
    </recommendedName>
    <alternativeName>
        <fullName evidence="1">Heme B farnesyltransferase</fullName>
    </alternativeName>
    <alternativeName>
        <fullName evidence="1">Heme O synthase</fullName>
    </alternativeName>
</protein>
<keyword id="KW-1003">Cell membrane</keyword>
<keyword id="KW-0350">Heme biosynthesis</keyword>
<keyword id="KW-0472">Membrane</keyword>
<keyword id="KW-1185">Reference proteome</keyword>
<keyword id="KW-0808">Transferase</keyword>
<keyword id="KW-0812">Transmembrane</keyword>
<keyword id="KW-1133">Transmembrane helix</keyword>
<accession>Q057F2</accession>
<comment type="function">
    <text evidence="1">Converts heme B (protoheme IX) to heme O by substitution of the vinyl group on carbon 2 of heme B porphyrin ring with a hydroxyethyl farnesyl side group.</text>
</comment>
<comment type="catalytic activity">
    <reaction evidence="1">
        <text>heme b + (2E,6E)-farnesyl diphosphate + H2O = Fe(II)-heme o + diphosphate</text>
        <dbReference type="Rhea" id="RHEA:28070"/>
        <dbReference type="ChEBI" id="CHEBI:15377"/>
        <dbReference type="ChEBI" id="CHEBI:33019"/>
        <dbReference type="ChEBI" id="CHEBI:60344"/>
        <dbReference type="ChEBI" id="CHEBI:60530"/>
        <dbReference type="ChEBI" id="CHEBI:175763"/>
        <dbReference type="EC" id="2.5.1.141"/>
    </reaction>
</comment>
<comment type="pathway">
    <text evidence="1">Porphyrin-containing compound metabolism; heme O biosynthesis; heme O from protoheme: step 1/1.</text>
</comment>
<comment type="subcellular location">
    <subcellularLocation>
        <location evidence="1">Cell membrane</location>
        <topology evidence="1">Multi-pass membrane protein</topology>
    </subcellularLocation>
</comment>
<comment type="miscellaneous">
    <text evidence="1">Carbon 2 of the heme B porphyrin ring is defined according to the Fischer nomenclature.</text>
</comment>
<comment type="similarity">
    <text evidence="1">Belongs to the UbiA prenyltransferase family. Protoheme IX farnesyltransferase subfamily.</text>
</comment>
<comment type="sequence caution" evidence="2">
    <conflict type="erroneous initiation">
        <sequence resource="EMBL-CDS" id="ABJ90747"/>
    </conflict>
</comment>
<sequence>MIKPGIILGNIICLSGGFFLALNEKLSKIFFLKTVFGLILIISSSCILNNIIDRDIDKKMNRTKNRFLCINTNVFLLKILFFFSIILLILGLLVFYIYINFLCTIISFFGFFFYVYLYSYLFKRKTYFSTFVGSVSGSLPPIIGYVAVNNCLNRCCTILFFMFSFWQIAHSYSIIIYRYSDYKLLNLPVFPILYGKLKTIIFISICILNLFFFNFLLYFFGYVKFFYFLYTSFFIFLWFIFSFLSNSRYFTIKIWSRIMFFFSIFIIFMISFLMSLNNF</sequence>
<name>CYOE_BUCCC</name>
<dbReference type="EC" id="2.5.1.141" evidence="1"/>
<dbReference type="EMBL" id="CP000263">
    <property type="protein sequence ID" value="ABJ90747.1"/>
    <property type="status" value="ALT_INIT"/>
    <property type="molecule type" value="Genomic_DNA"/>
</dbReference>
<dbReference type="SMR" id="Q057F2"/>
<dbReference type="STRING" id="372461.BCc_287"/>
<dbReference type="KEGG" id="bcc:BCc_287"/>
<dbReference type="eggNOG" id="COG0109">
    <property type="taxonomic scope" value="Bacteria"/>
</dbReference>
<dbReference type="HOGENOM" id="CLU_029631_0_0_6"/>
<dbReference type="UniPathway" id="UPA00834">
    <property type="reaction ID" value="UER00712"/>
</dbReference>
<dbReference type="Proteomes" id="UP000000669">
    <property type="component" value="Chromosome"/>
</dbReference>
<dbReference type="GO" id="GO:0005886">
    <property type="term" value="C:plasma membrane"/>
    <property type="evidence" value="ECO:0007669"/>
    <property type="project" value="UniProtKB-SubCell"/>
</dbReference>
<dbReference type="GO" id="GO:0008495">
    <property type="term" value="F:protoheme IX farnesyltransferase activity"/>
    <property type="evidence" value="ECO:0007669"/>
    <property type="project" value="UniProtKB-UniRule"/>
</dbReference>
<dbReference type="GO" id="GO:0048034">
    <property type="term" value="P:heme O biosynthetic process"/>
    <property type="evidence" value="ECO:0007669"/>
    <property type="project" value="UniProtKB-UniRule"/>
</dbReference>
<dbReference type="CDD" id="cd13957">
    <property type="entry name" value="PT_UbiA_Cox10"/>
    <property type="match status" value="1"/>
</dbReference>
<dbReference type="Gene3D" id="1.10.357.140">
    <property type="entry name" value="UbiA prenyltransferase"/>
    <property type="match status" value="1"/>
</dbReference>
<dbReference type="HAMAP" id="MF_00154">
    <property type="entry name" value="CyoE_CtaB"/>
    <property type="match status" value="1"/>
</dbReference>
<dbReference type="InterPro" id="IPR006369">
    <property type="entry name" value="Protohaem_IX_farnesylTrfase"/>
</dbReference>
<dbReference type="InterPro" id="IPR000537">
    <property type="entry name" value="UbiA_prenyltransferase"/>
</dbReference>
<dbReference type="InterPro" id="IPR044878">
    <property type="entry name" value="UbiA_sf"/>
</dbReference>
<dbReference type="PANTHER" id="PTHR43448">
    <property type="entry name" value="PROTOHEME IX FARNESYLTRANSFERASE, MITOCHONDRIAL"/>
    <property type="match status" value="1"/>
</dbReference>
<dbReference type="PANTHER" id="PTHR43448:SF2">
    <property type="entry name" value="PROTOHEME IX FARNESYLTRANSFERASE, MITOCHONDRIAL"/>
    <property type="match status" value="1"/>
</dbReference>
<dbReference type="Pfam" id="PF01040">
    <property type="entry name" value="UbiA"/>
    <property type="match status" value="1"/>
</dbReference>
<dbReference type="PROSITE" id="PS00943">
    <property type="entry name" value="UBIA"/>
    <property type="match status" value="1"/>
</dbReference>